<gene>
    <name type="ORF">CPIJ004899</name>
</gene>
<keyword id="KW-0175">Coiled coil</keyword>
<keyword id="KW-0963">Cytoplasm</keyword>
<keyword id="KW-0396">Initiation factor</keyword>
<keyword id="KW-0648">Protein biosynthesis</keyword>
<keyword id="KW-1185">Reference proteome</keyword>
<protein>
    <recommendedName>
        <fullName evidence="1">Eukaryotic translation initiation factor 3 subunit J</fullName>
        <shortName evidence="1">eIF3j</shortName>
    </recommendedName>
</protein>
<proteinExistence type="inferred from homology"/>
<organism>
    <name type="scientific">Culex quinquefasciatus</name>
    <name type="common">Southern house mosquito</name>
    <name type="synonym">Culex pungens</name>
    <dbReference type="NCBI Taxonomy" id="7176"/>
    <lineage>
        <taxon>Eukaryota</taxon>
        <taxon>Metazoa</taxon>
        <taxon>Ecdysozoa</taxon>
        <taxon>Arthropoda</taxon>
        <taxon>Hexapoda</taxon>
        <taxon>Insecta</taxon>
        <taxon>Pterygota</taxon>
        <taxon>Neoptera</taxon>
        <taxon>Endopterygota</taxon>
        <taxon>Diptera</taxon>
        <taxon>Nematocera</taxon>
        <taxon>Culicoidea</taxon>
        <taxon>Culicidae</taxon>
        <taxon>Culicinae</taxon>
        <taxon>Culicini</taxon>
        <taxon>Culex</taxon>
        <taxon>Culex</taxon>
    </lineage>
</organism>
<comment type="function">
    <text evidence="1">Component of the eukaryotic translation initiation factor 3 (eIF-3) complex, which is involved in protein synthesis of a specialized repertoire of mRNAs and, together with other initiation factors, stimulates binding of mRNA and methionyl-tRNAi to the 40S ribosome. The eIF-3 complex specifically targets and initiates translation of a subset of mRNAs involved in cell proliferation.</text>
</comment>
<comment type="subunit">
    <text evidence="1">Component of the eukaryotic translation initiation factor 3 (eIF-3) complex.</text>
</comment>
<comment type="subcellular location">
    <subcellularLocation>
        <location evidence="1">Cytoplasm</location>
    </subcellularLocation>
</comment>
<comment type="similarity">
    <text evidence="1">Belongs to the eIF-3 subunit J family.</text>
</comment>
<sequence length="241" mass="28027">MEEDWEQHGEKEEVPLPAKKPDANKWDGEDEEEEVKDSWEDEDELEEKKDEEKVETPKAKPKKTLQQKIVEKEKQKHEEAERRRLEKEAENMTPEQKLAEKLRLQKLQEESDLKNALDTFGVTTLAGGIDGMTPNTKEDFVELSDAIVKKLASYKSDPEYADFLEDLVTKLFAGLPSNNIRKVKGILDNLYLEKQKLEKGDKPKKSKGGKVKARLKLDGENQNFDEYQPKYDDFDEYDDFM</sequence>
<name>EIF3J_CULQU</name>
<dbReference type="EMBL" id="DS231892">
    <property type="protein sequence ID" value="EDS44070.1"/>
    <property type="molecule type" value="Genomic_DNA"/>
</dbReference>
<dbReference type="RefSeq" id="XP_001846579.1">
    <property type="nucleotide sequence ID" value="XM_001846527.1"/>
</dbReference>
<dbReference type="SMR" id="B0WCZ5"/>
<dbReference type="FunCoup" id="B0WCZ5">
    <property type="interactions" value="1617"/>
</dbReference>
<dbReference type="STRING" id="7176.B0WCZ5"/>
<dbReference type="EnsemblMetazoa" id="CPIJ004899-RA">
    <property type="protein sequence ID" value="CPIJ004899-PA"/>
    <property type="gene ID" value="CPIJ004899"/>
</dbReference>
<dbReference type="KEGG" id="cqu:CpipJ_CPIJ004899"/>
<dbReference type="CTD" id="8669"/>
<dbReference type="VEuPathDB" id="VectorBase:CPIJ004899"/>
<dbReference type="VEuPathDB" id="VectorBase:CQUJHB016548"/>
<dbReference type="eggNOG" id="KOG4813">
    <property type="taxonomic scope" value="Eukaryota"/>
</dbReference>
<dbReference type="HOGENOM" id="CLU_085806_2_0_1"/>
<dbReference type="InParanoid" id="B0WCZ5"/>
<dbReference type="OMA" id="KPHYALW"/>
<dbReference type="OrthoDB" id="20381at2759"/>
<dbReference type="PhylomeDB" id="B0WCZ5"/>
<dbReference type="Proteomes" id="UP000002320">
    <property type="component" value="Unassembled WGS sequence"/>
</dbReference>
<dbReference type="GO" id="GO:0016282">
    <property type="term" value="C:eukaryotic 43S preinitiation complex"/>
    <property type="evidence" value="ECO:0007669"/>
    <property type="project" value="UniProtKB-UniRule"/>
</dbReference>
<dbReference type="GO" id="GO:0033290">
    <property type="term" value="C:eukaryotic 48S preinitiation complex"/>
    <property type="evidence" value="ECO:0007669"/>
    <property type="project" value="UniProtKB-UniRule"/>
</dbReference>
<dbReference type="GO" id="GO:0005852">
    <property type="term" value="C:eukaryotic translation initiation factor 3 complex"/>
    <property type="evidence" value="ECO:0007669"/>
    <property type="project" value="UniProtKB-UniRule"/>
</dbReference>
<dbReference type="GO" id="GO:0003743">
    <property type="term" value="F:translation initiation factor activity"/>
    <property type="evidence" value="ECO:0007669"/>
    <property type="project" value="UniProtKB-UniRule"/>
</dbReference>
<dbReference type="GO" id="GO:0001732">
    <property type="term" value="P:formation of cytoplasmic translation initiation complex"/>
    <property type="evidence" value="ECO:0007669"/>
    <property type="project" value="UniProtKB-UniRule"/>
</dbReference>
<dbReference type="Gene3D" id="1.10.246.60">
    <property type="entry name" value="Eukaryotic translation initiation factor 3 like domains"/>
    <property type="match status" value="1"/>
</dbReference>
<dbReference type="HAMAP" id="MF_03009">
    <property type="entry name" value="eIF3j"/>
    <property type="match status" value="1"/>
</dbReference>
<dbReference type="InterPro" id="IPR023194">
    <property type="entry name" value="eIF3-like_dom_sf"/>
</dbReference>
<dbReference type="InterPro" id="IPR013906">
    <property type="entry name" value="eIF3j"/>
</dbReference>
<dbReference type="PANTHER" id="PTHR21681">
    <property type="entry name" value="EUKARYOTIC TRANSLATION INITIATION FACTOR 3 SUBUNIT J"/>
    <property type="match status" value="1"/>
</dbReference>
<dbReference type="PANTHER" id="PTHR21681:SF0">
    <property type="entry name" value="EUKARYOTIC TRANSLATION INITIATION FACTOR 3 SUBUNIT J"/>
    <property type="match status" value="1"/>
</dbReference>
<dbReference type="Pfam" id="PF08597">
    <property type="entry name" value="eIF3_subunit"/>
    <property type="match status" value="1"/>
</dbReference>
<reference key="1">
    <citation type="submission" date="2007-03" db="EMBL/GenBank/DDBJ databases">
        <title>Annotation of Culex pipiens quinquefasciatus.</title>
        <authorList>
            <consortium name="The Broad Institute Genome Sequencing Platform"/>
            <person name="Atkinson P.W."/>
            <person name="Hemingway J."/>
            <person name="Christensen B.M."/>
            <person name="Higgs S."/>
            <person name="Kodira C.D."/>
            <person name="Hannick L.I."/>
            <person name="Megy K."/>
            <person name="O'Leary S.B."/>
            <person name="Pearson M."/>
            <person name="Haas B.J."/>
            <person name="Mauceli E."/>
            <person name="Wortman J.R."/>
            <person name="Lee N.H."/>
            <person name="Guigo R."/>
            <person name="Stanke M."/>
            <person name="Alvarado L."/>
            <person name="Amedeo P."/>
            <person name="Antoine C.H."/>
            <person name="Arensburger P."/>
            <person name="Bidwell S.L."/>
            <person name="Crawford M."/>
            <person name="Camaro F."/>
            <person name="Devon K."/>
            <person name="Engels R."/>
            <person name="Hammond M."/>
            <person name="Howarth C."/>
            <person name="Koehrsen M."/>
            <person name="Lawson D."/>
            <person name="Montgomery P."/>
            <person name="Nene V."/>
            <person name="Nusbaum C."/>
            <person name="Puiu D."/>
            <person name="Romero-Severson J."/>
            <person name="Severson D.W."/>
            <person name="Shumway M."/>
            <person name="Sisk P."/>
            <person name="Stolte C."/>
            <person name="Zeng Q."/>
            <person name="Eisenstadt E."/>
            <person name="Fraser-Liggett C.M."/>
            <person name="Strausberg R."/>
            <person name="Galagan J."/>
            <person name="Birren B."/>
            <person name="Collins F.H."/>
        </authorList>
    </citation>
    <scope>NUCLEOTIDE SEQUENCE [LARGE SCALE GENOMIC DNA]</scope>
    <source>
        <strain>JHB</strain>
    </source>
</reference>
<accession>B0WCZ5</accession>
<evidence type="ECO:0000255" key="1">
    <source>
        <dbReference type="HAMAP-Rule" id="MF_03009"/>
    </source>
</evidence>
<evidence type="ECO:0000256" key="2">
    <source>
        <dbReference type="SAM" id="MobiDB-lite"/>
    </source>
</evidence>
<feature type="chain" id="PRO_0000365131" description="Eukaryotic translation initiation factor 3 subunit J">
    <location>
        <begin position="1"/>
        <end position="241"/>
    </location>
</feature>
<feature type="region of interest" description="Disordered" evidence="2">
    <location>
        <begin position="1"/>
        <end position="99"/>
    </location>
</feature>
<feature type="coiled-coil region" evidence="1">
    <location>
        <begin position="31"/>
        <end position="119"/>
    </location>
</feature>
<feature type="compositionally biased region" description="Basic and acidic residues" evidence="2">
    <location>
        <begin position="1"/>
        <end position="27"/>
    </location>
</feature>
<feature type="compositionally biased region" description="Acidic residues" evidence="2">
    <location>
        <begin position="28"/>
        <end position="45"/>
    </location>
</feature>
<feature type="compositionally biased region" description="Basic and acidic residues" evidence="2">
    <location>
        <begin position="46"/>
        <end position="58"/>
    </location>
</feature>
<feature type="compositionally biased region" description="Basic and acidic residues" evidence="2">
    <location>
        <begin position="69"/>
        <end position="90"/>
    </location>
</feature>